<name>QUEG_XANCP</name>
<feature type="chain" id="PRO_0000416089" description="Epoxyqueuosine reductase">
    <location>
        <begin position="1"/>
        <end position="355"/>
    </location>
</feature>
<feature type="domain" description="4Fe-4S ferredoxin-type" evidence="1">
    <location>
        <begin position="185"/>
        <end position="217"/>
    </location>
</feature>
<feature type="active site" description="Proton donor" evidence="1">
    <location>
        <position position="143"/>
    </location>
</feature>
<feature type="binding site" evidence="1">
    <location>
        <position position="197"/>
    </location>
    <ligand>
        <name>[4Fe-4S] cluster</name>
        <dbReference type="ChEBI" id="CHEBI:49883"/>
        <label>1</label>
    </ligand>
</feature>
<feature type="binding site" evidence="1">
    <location>
        <position position="200"/>
    </location>
    <ligand>
        <name>[4Fe-4S] cluster</name>
        <dbReference type="ChEBI" id="CHEBI:49883"/>
        <label>1</label>
    </ligand>
</feature>
<feature type="binding site" evidence="1">
    <location>
        <position position="203"/>
    </location>
    <ligand>
        <name>[4Fe-4S] cluster</name>
        <dbReference type="ChEBI" id="CHEBI:49883"/>
        <label>1</label>
    </ligand>
</feature>
<feature type="binding site" evidence="1">
    <location>
        <position position="207"/>
    </location>
    <ligand>
        <name>[4Fe-4S] cluster</name>
        <dbReference type="ChEBI" id="CHEBI:49883"/>
        <label>2</label>
    </ligand>
</feature>
<feature type="binding site" evidence="1">
    <location>
        <position position="223"/>
    </location>
    <ligand>
        <name>[4Fe-4S] cluster</name>
        <dbReference type="ChEBI" id="CHEBI:49883"/>
        <label>2</label>
    </ligand>
</feature>
<feature type="binding site" evidence="1">
    <location>
        <position position="250"/>
    </location>
    <ligand>
        <name>[4Fe-4S] cluster</name>
        <dbReference type="ChEBI" id="CHEBI:49883"/>
        <label>2</label>
    </ligand>
</feature>
<feature type="binding site" evidence="1">
    <location>
        <position position="253"/>
    </location>
    <ligand>
        <name>[4Fe-4S] cluster</name>
        <dbReference type="ChEBI" id="CHEBI:49883"/>
        <label>2</label>
    </ligand>
</feature>
<feature type="binding site" evidence="1">
    <location>
        <position position="257"/>
    </location>
    <ligand>
        <name>[4Fe-4S] cluster</name>
        <dbReference type="ChEBI" id="CHEBI:49883"/>
        <label>1</label>
    </ligand>
</feature>
<gene>
    <name evidence="1" type="primary">queG</name>
    <name type="ordered locus">XCC2302</name>
</gene>
<dbReference type="EC" id="1.17.99.6" evidence="1"/>
<dbReference type="EMBL" id="AE008922">
    <property type="protein sequence ID" value="AAM41581.1"/>
    <property type="molecule type" value="Genomic_DNA"/>
</dbReference>
<dbReference type="RefSeq" id="NP_637657.1">
    <property type="nucleotide sequence ID" value="NC_003902.1"/>
</dbReference>
<dbReference type="RefSeq" id="WP_011037446.1">
    <property type="nucleotide sequence ID" value="NC_003902.1"/>
</dbReference>
<dbReference type="SMR" id="Q8P8E0"/>
<dbReference type="STRING" id="190485.XCC2302"/>
<dbReference type="EnsemblBacteria" id="AAM41581">
    <property type="protein sequence ID" value="AAM41581"/>
    <property type="gene ID" value="XCC2302"/>
</dbReference>
<dbReference type="KEGG" id="xcc:XCC2302"/>
<dbReference type="PATRIC" id="fig|190485.4.peg.2452"/>
<dbReference type="eggNOG" id="COG1600">
    <property type="taxonomic scope" value="Bacteria"/>
</dbReference>
<dbReference type="HOGENOM" id="CLU_030790_0_1_6"/>
<dbReference type="OrthoDB" id="9784571at2"/>
<dbReference type="UniPathway" id="UPA00392"/>
<dbReference type="Proteomes" id="UP000001010">
    <property type="component" value="Chromosome"/>
</dbReference>
<dbReference type="GO" id="GO:0005737">
    <property type="term" value="C:cytoplasm"/>
    <property type="evidence" value="ECO:0007669"/>
    <property type="project" value="UniProtKB-SubCell"/>
</dbReference>
<dbReference type="GO" id="GO:0051539">
    <property type="term" value="F:4 iron, 4 sulfur cluster binding"/>
    <property type="evidence" value="ECO:0007669"/>
    <property type="project" value="UniProtKB-KW"/>
</dbReference>
<dbReference type="GO" id="GO:0052693">
    <property type="term" value="F:epoxyqueuosine reductase activity"/>
    <property type="evidence" value="ECO:0000318"/>
    <property type="project" value="GO_Central"/>
</dbReference>
<dbReference type="GO" id="GO:0046872">
    <property type="term" value="F:metal ion binding"/>
    <property type="evidence" value="ECO:0007669"/>
    <property type="project" value="UniProtKB-KW"/>
</dbReference>
<dbReference type="GO" id="GO:0008616">
    <property type="term" value="P:queuosine biosynthetic process"/>
    <property type="evidence" value="ECO:0000318"/>
    <property type="project" value="GO_Central"/>
</dbReference>
<dbReference type="GO" id="GO:0006400">
    <property type="term" value="P:tRNA modification"/>
    <property type="evidence" value="ECO:0007669"/>
    <property type="project" value="UniProtKB-UniRule"/>
</dbReference>
<dbReference type="FunFam" id="3.30.70.20:FF:000017">
    <property type="entry name" value="Epoxyqueuosine reductase"/>
    <property type="match status" value="1"/>
</dbReference>
<dbReference type="Gene3D" id="3.30.70.20">
    <property type="match status" value="1"/>
</dbReference>
<dbReference type="HAMAP" id="MF_00916">
    <property type="entry name" value="QueG"/>
    <property type="match status" value="1"/>
</dbReference>
<dbReference type="InterPro" id="IPR017896">
    <property type="entry name" value="4Fe4S_Fe-S-bd"/>
</dbReference>
<dbReference type="InterPro" id="IPR017900">
    <property type="entry name" value="4Fe4S_Fe_S_CS"/>
</dbReference>
<dbReference type="InterPro" id="IPR004453">
    <property type="entry name" value="QueG"/>
</dbReference>
<dbReference type="InterPro" id="IPR013542">
    <property type="entry name" value="QueG_DUF1730"/>
</dbReference>
<dbReference type="NCBIfam" id="TIGR00276">
    <property type="entry name" value="tRNA epoxyqueuosine(34) reductase QueG"/>
    <property type="match status" value="1"/>
</dbReference>
<dbReference type="PANTHER" id="PTHR30002">
    <property type="entry name" value="EPOXYQUEUOSINE REDUCTASE"/>
    <property type="match status" value="1"/>
</dbReference>
<dbReference type="PANTHER" id="PTHR30002:SF4">
    <property type="entry name" value="EPOXYQUEUOSINE REDUCTASE"/>
    <property type="match status" value="1"/>
</dbReference>
<dbReference type="Pfam" id="PF13484">
    <property type="entry name" value="Fer4_16"/>
    <property type="match status" value="1"/>
</dbReference>
<dbReference type="Pfam" id="PF08331">
    <property type="entry name" value="QueG_DUF1730"/>
    <property type="match status" value="1"/>
</dbReference>
<dbReference type="SUPFAM" id="SSF54862">
    <property type="entry name" value="4Fe-4S ferredoxins"/>
    <property type="match status" value="1"/>
</dbReference>
<dbReference type="PROSITE" id="PS00198">
    <property type="entry name" value="4FE4S_FER_1"/>
    <property type="match status" value="1"/>
</dbReference>
<dbReference type="PROSITE" id="PS51379">
    <property type="entry name" value="4FE4S_FER_2"/>
    <property type="match status" value="1"/>
</dbReference>
<accession>Q8P8E0</accession>
<organism>
    <name type="scientific">Xanthomonas campestris pv. campestris (strain ATCC 33913 / DSM 3586 / NCPPB 528 / LMG 568 / P 25)</name>
    <dbReference type="NCBI Taxonomy" id="190485"/>
    <lineage>
        <taxon>Bacteria</taxon>
        <taxon>Pseudomonadati</taxon>
        <taxon>Pseudomonadota</taxon>
        <taxon>Gammaproteobacteria</taxon>
        <taxon>Lysobacterales</taxon>
        <taxon>Lysobacteraceae</taxon>
        <taxon>Xanthomonas</taxon>
    </lineage>
</organism>
<protein>
    <recommendedName>
        <fullName evidence="1">Epoxyqueuosine reductase</fullName>
        <ecNumber evidence="1">1.17.99.6</ecNumber>
    </recommendedName>
    <alternativeName>
        <fullName evidence="1">Queuosine biosynthesis protein QueG</fullName>
    </alternativeName>
</protein>
<keyword id="KW-0004">4Fe-4S</keyword>
<keyword id="KW-0963">Cytoplasm</keyword>
<keyword id="KW-0408">Iron</keyword>
<keyword id="KW-0411">Iron-sulfur</keyword>
<keyword id="KW-0479">Metal-binding</keyword>
<keyword id="KW-0560">Oxidoreductase</keyword>
<keyword id="KW-0671">Queuosine biosynthesis</keyword>
<keyword id="KW-1185">Reference proteome</keyword>
<keyword id="KW-0819">tRNA processing</keyword>
<comment type="function">
    <text evidence="1">Catalyzes the conversion of epoxyqueuosine (oQ) to queuosine (Q), which is a hypermodified base found in the wobble positions of tRNA(Asp), tRNA(Asn), tRNA(His) and tRNA(Tyr).</text>
</comment>
<comment type="catalytic activity">
    <reaction evidence="1">
        <text>epoxyqueuosine(34) in tRNA + AH2 = queuosine(34) in tRNA + A + H2O</text>
        <dbReference type="Rhea" id="RHEA:32159"/>
        <dbReference type="Rhea" id="RHEA-COMP:18571"/>
        <dbReference type="Rhea" id="RHEA-COMP:18582"/>
        <dbReference type="ChEBI" id="CHEBI:13193"/>
        <dbReference type="ChEBI" id="CHEBI:15377"/>
        <dbReference type="ChEBI" id="CHEBI:17499"/>
        <dbReference type="ChEBI" id="CHEBI:194431"/>
        <dbReference type="ChEBI" id="CHEBI:194443"/>
        <dbReference type="EC" id="1.17.99.6"/>
    </reaction>
</comment>
<comment type="cofactor">
    <cofactor evidence="1">
        <name>cob(II)alamin</name>
        <dbReference type="ChEBI" id="CHEBI:16304"/>
    </cofactor>
</comment>
<comment type="cofactor">
    <cofactor evidence="1">
        <name>[4Fe-4S] cluster</name>
        <dbReference type="ChEBI" id="CHEBI:49883"/>
    </cofactor>
    <text evidence="1">Binds 2 [4Fe-4S] clusters per monomer.</text>
</comment>
<comment type="pathway">
    <text evidence="1">tRNA modification; tRNA-queuosine biosynthesis.</text>
</comment>
<comment type="subunit">
    <text evidence="1">Monomer.</text>
</comment>
<comment type="subcellular location">
    <subcellularLocation>
        <location evidence="1">Cytoplasm</location>
    </subcellularLocation>
</comment>
<comment type="similarity">
    <text evidence="1">Belongs to the QueG family.</text>
</comment>
<evidence type="ECO:0000255" key="1">
    <source>
        <dbReference type="HAMAP-Rule" id="MF_00916"/>
    </source>
</evidence>
<sequence>MSAVLARPDPTDAAARIRTLAREAGFQRCGITGIELGEDEAHLRSWLAEGLYGTMHWMAQHGDKRSRPQELVPGTLRVLSVGMDYGRKDDTEAWDTLHDGRRAYVARYALGRDYHKLMRNRLQKLAERIQAEVGPFGYRVFVDSAPVLERALARNAGLGWIGKHTCLIDRGGGSWFFLGEIYLDLPLPIDTPATAHCGTCTRCIDICPTQAIIAPHRLDARRCIAYLTIEHDGAIPEDMRKPIGNRIFGCDDCQLICPWNKFAQRTDEPDFRARNDLDVATLPQLFAWDEAEFLRRTEGSPIRRSGHERWLRNIAVGLGNAPGSEDVLAALESRRHDDSALVREHVGWALAQHGL</sequence>
<proteinExistence type="inferred from homology"/>
<reference key="1">
    <citation type="journal article" date="2002" name="Nature">
        <title>Comparison of the genomes of two Xanthomonas pathogens with differing host specificities.</title>
        <authorList>
            <person name="da Silva A.C.R."/>
            <person name="Ferro J.A."/>
            <person name="Reinach F.C."/>
            <person name="Farah C.S."/>
            <person name="Furlan L.R."/>
            <person name="Quaggio R.B."/>
            <person name="Monteiro-Vitorello C.B."/>
            <person name="Van Sluys M.A."/>
            <person name="Almeida N.F. Jr."/>
            <person name="Alves L.M.C."/>
            <person name="do Amaral A.M."/>
            <person name="Bertolini M.C."/>
            <person name="Camargo L.E.A."/>
            <person name="Camarotte G."/>
            <person name="Cannavan F."/>
            <person name="Cardozo J."/>
            <person name="Chambergo F."/>
            <person name="Ciapina L.P."/>
            <person name="Cicarelli R.M.B."/>
            <person name="Coutinho L.L."/>
            <person name="Cursino-Santos J.R."/>
            <person name="El-Dorry H."/>
            <person name="Faria J.B."/>
            <person name="Ferreira A.J.S."/>
            <person name="Ferreira R.C.C."/>
            <person name="Ferro M.I.T."/>
            <person name="Formighieri E.F."/>
            <person name="Franco M.C."/>
            <person name="Greggio C.C."/>
            <person name="Gruber A."/>
            <person name="Katsuyama A.M."/>
            <person name="Kishi L.T."/>
            <person name="Leite R.P."/>
            <person name="Lemos E.G.M."/>
            <person name="Lemos M.V.F."/>
            <person name="Locali E.C."/>
            <person name="Machado M.A."/>
            <person name="Madeira A.M.B.N."/>
            <person name="Martinez-Rossi N.M."/>
            <person name="Martins E.C."/>
            <person name="Meidanis J."/>
            <person name="Menck C.F.M."/>
            <person name="Miyaki C.Y."/>
            <person name="Moon D.H."/>
            <person name="Moreira L.M."/>
            <person name="Novo M.T.M."/>
            <person name="Okura V.K."/>
            <person name="Oliveira M.C."/>
            <person name="Oliveira V.R."/>
            <person name="Pereira H.A."/>
            <person name="Rossi A."/>
            <person name="Sena J.A.D."/>
            <person name="Silva C."/>
            <person name="de Souza R.F."/>
            <person name="Spinola L.A.F."/>
            <person name="Takita M.A."/>
            <person name="Tamura R.E."/>
            <person name="Teixeira E.C."/>
            <person name="Tezza R.I.D."/>
            <person name="Trindade dos Santos M."/>
            <person name="Truffi D."/>
            <person name="Tsai S.M."/>
            <person name="White F.F."/>
            <person name="Setubal J.C."/>
            <person name="Kitajima J.P."/>
        </authorList>
    </citation>
    <scope>NUCLEOTIDE SEQUENCE [LARGE SCALE GENOMIC DNA]</scope>
    <source>
        <strain>ATCC 33913 / DSM 3586 / NCPPB 528 / LMG 568 / P 25</strain>
    </source>
</reference>